<comment type="function">
    <text evidence="1">Has an important function as a repair enzyme for proteins that have been inactivated by oxidation. Catalyzes the reversible oxidation-reduction of methionine sulfoxide in proteins to methionine.</text>
</comment>
<comment type="catalytic activity">
    <reaction evidence="1">
        <text>L-methionyl-[protein] + [thioredoxin]-disulfide + H2O = L-methionyl-(S)-S-oxide-[protein] + [thioredoxin]-dithiol</text>
        <dbReference type="Rhea" id="RHEA:14217"/>
        <dbReference type="Rhea" id="RHEA-COMP:10698"/>
        <dbReference type="Rhea" id="RHEA-COMP:10700"/>
        <dbReference type="Rhea" id="RHEA-COMP:12313"/>
        <dbReference type="Rhea" id="RHEA-COMP:12315"/>
        <dbReference type="ChEBI" id="CHEBI:15377"/>
        <dbReference type="ChEBI" id="CHEBI:16044"/>
        <dbReference type="ChEBI" id="CHEBI:29950"/>
        <dbReference type="ChEBI" id="CHEBI:44120"/>
        <dbReference type="ChEBI" id="CHEBI:50058"/>
        <dbReference type="EC" id="1.8.4.11"/>
    </reaction>
</comment>
<comment type="catalytic activity">
    <reaction evidence="1">
        <text>[thioredoxin]-disulfide + L-methionine + H2O = L-methionine (S)-S-oxide + [thioredoxin]-dithiol</text>
        <dbReference type="Rhea" id="RHEA:19993"/>
        <dbReference type="Rhea" id="RHEA-COMP:10698"/>
        <dbReference type="Rhea" id="RHEA-COMP:10700"/>
        <dbReference type="ChEBI" id="CHEBI:15377"/>
        <dbReference type="ChEBI" id="CHEBI:29950"/>
        <dbReference type="ChEBI" id="CHEBI:50058"/>
        <dbReference type="ChEBI" id="CHEBI:57844"/>
        <dbReference type="ChEBI" id="CHEBI:58772"/>
        <dbReference type="EC" id="1.8.4.11"/>
    </reaction>
</comment>
<comment type="similarity">
    <text evidence="1">Belongs to the MsrA Met sulfoxide reductase family.</text>
</comment>
<accession>B8HA70</accession>
<name>MSRA_PSECP</name>
<organism>
    <name type="scientific">Pseudarthrobacter chlorophenolicus (strain ATCC 700700 / DSM 12829 / CIP 107037 / JCM 12360 / KCTC 9906 / NCIMB 13794 / A6)</name>
    <name type="common">Arthrobacter chlorophenolicus</name>
    <dbReference type="NCBI Taxonomy" id="452863"/>
    <lineage>
        <taxon>Bacteria</taxon>
        <taxon>Bacillati</taxon>
        <taxon>Actinomycetota</taxon>
        <taxon>Actinomycetes</taxon>
        <taxon>Micrococcales</taxon>
        <taxon>Micrococcaceae</taxon>
        <taxon>Pseudarthrobacter</taxon>
    </lineage>
</organism>
<proteinExistence type="inferred from homology"/>
<dbReference type="EC" id="1.8.4.11" evidence="1"/>
<dbReference type="EMBL" id="CP001341">
    <property type="protein sequence ID" value="ACL40162.1"/>
    <property type="molecule type" value="Genomic_DNA"/>
</dbReference>
<dbReference type="RefSeq" id="WP_015937379.1">
    <property type="nucleotide sequence ID" value="NC_011886.1"/>
</dbReference>
<dbReference type="SMR" id="B8HA70"/>
<dbReference type="STRING" id="452863.Achl_2194"/>
<dbReference type="KEGG" id="ach:Achl_2194"/>
<dbReference type="eggNOG" id="COG0225">
    <property type="taxonomic scope" value="Bacteria"/>
</dbReference>
<dbReference type="HOGENOM" id="CLU_031040_10_0_11"/>
<dbReference type="OrthoDB" id="4174719at2"/>
<dbReference type="Proteomes" id="UP000002505">
    <property type="component" value="Chromosome"/>
</dbReference>
<dbReference type="GO" id="GO:0033744">
    <property type="term" value="F:L-methionine:thioredoxin-disulfide S-oxidoreductase activity"/>
    <property type="evidence" value="ECO:0007669"/>
    <property type="project" value="RHEA"/>
</dbReference>
<dbReference type="GO" id="GO:0008113">
    <property type="term" value="F:peptide-methionine (S)-S-oxide reductase activity"/>
    <property type="evidence" value="ECO:0007669"/>
    <property type="project" value="UniProtKB-UniRule"/>
</dbReference>
<dbReference type="GO" id="GO:0036211">
    <property type="term" value="P:protein modification process"/>
    <property type="evidence" value="ECO:0007669"/>
    <property type="project" value="UniProtKB-UniRule"/>
</dbReference>
<dbReference type="Gene3D" id="3.30.1060.10">
    <property type="entry name" value="Peptide methionine sulphoxide reductase MsrA"/>
    <property type="match status" value="1"/>
</dbReference>
<dbReference type="HAMAP" id="MF_01401">
    <property type="entry name" value="MsrA"/>
    <property type="match status" value="1"/>
</dbReference>
<dbReference type="InterPro" id="IPR002569">
    <property type="entry name" value="Met_Sox_Rdtase_MsrA_dom"/>
</dbReference>
<dbReference type="InterPro" id="IPR036509">
    <property type="entry name" value="Met_Sox_Rdtase_MsrA_sf"/>
</dbReference>
<dbReference type="NCBIfam" id="TIGR00401">
    <property type="entry name" value="msrA"/>
    <property type="match status" value="1"/>
</dbReference>
<dbReference type="PANTHER" id="PTHR43774">
    <property type="entry name" value="PEPTIDE METHIONINE SULFOXIDE REDUCTASE"/>
    <property type="match status" value="1"/>
</dbReference>
<dbReference type="PANTHER" id="PTHR43774:SF1">
    <property type="entry name" value="PEPTIDE METHIONINE SULFOXIDE REDUCTASE MSRA 2"/>
    <property type="match status" value="1"/>
</dbReference>
<dbReference type="Pfam" id="PF01625">
    <property type="entry name" value="PMSR"/>
    <property type="match status" value="1"/>
</dbReference>
<dbReference type="SUPFAM" id="SSF55068">
    <property type="entry name" value="Peptide methionine sulfoxide reductase"/>
    <property type="match status" value="1"/>
</dbReference>
<feature type="chain" id="PRO_1000184558" description="Peptide methionine sulfoxide reductase MsrA">
    <location>
        <begin position="1"/>
        <end position="174"/>
    </location>
</feature>
<feature type="active site" evidence="1">
    <location>
        <position position="10"/>
    </location>
</feature>
<reference key="1">
    <citation type="submission" date="2009-01" db="EMBL/GenBank/DDBJ databases">
        <title>Complete sequence of chromosome of Arthrobacter chlorophenolicus A6.</title>
        <authorList>
            <consortium name="US DOE Joint Genome Institute"/>
            <person name="Lucas S."/>
            <person name="Copeland A."/>
            <person name="Lapidus A."/>
            <person name="Glavina del Rio T."/>
            <person name="Tice H."/>
            <person name="Bruce D."/>
            <person name="Goodwin L."/>
            <person name="Pitluck S."/>
            <person name="Goltsman E."/>
            <person name="Clum A."/>
            <person name="Larimer F."/>
            <person name="Land M."/>
            <person name="Hauser L."/>
            <person name="Kyrpides N."/>
            <person name="Mikhailova N."/>
            <person name="Jansson J."/>
            <person name="Richardson P."/>
        </authorList>
    </citation>
    <scope>NUCLEOTIDE SEQUENCE [LARGE SCALE GENOMIC DNA]</scope>
    <source>
        <strain>ATCC 700700 / DSM 12829 / CIP 107037 / JCM 12360 / KCTC 9906 / NCIMB 13794 / A6</strain>
    </source>
</reference>
<evidence type="ECO:0000255" key="1">
    <source>
        <dbReference type="HAMAP-Rule" id="MF_01401"/>
    </source>
</evidence>
<protein>
    <recommendedName>
        <fullName evidence="1">Peptide methionine sulfoxide reductase MsrA</fullName>
        <shortName evidence="1">Protein-methionine-S-oxide reductase</shortName>
        <ecNumber evidence="1">1.8.4.11</ecNumber>
    </recommendedName>
    <alternativeName>
        <fullName evidence="1">Peptide-methionine (S)-S-oxide reductase</fullName>
        <shortName evidence="1">Peptide Met(O) reductase</shortName>
    </alternativeName>
</protein>
<keyword id="KW-0560">Oxidoreductase</keyword>
<sequence length="174" mass="19810">MKTFVLGGGCFWCLDAVYQKTKGVTAVVSGYTGGHDPYPDYYSVCSGTTGHAEVVAVTFDEEIIPAEVILDMFFALHDPTTLNRQGYDVGTQYRSSMFYETTEEKILFEEAIDRNQALWSHPIVTEVSRLPRFHVAEEFHQDYYAKHPEQGYCQVIINPKLAKARKYYSAWLNA</sequence>
<gene>
    <name evidence="1" type="primary">msrA</name>
    <name type="ordered locus">Achl_2194</name>
</gene>